<comment type="function">
    <text evidence="1">Catalyzes the synthesis of GMP from XMP.</text>
</comment>
<comment type="catalytic activity">
    <reaction evidence="1">
        <text>XMP + L-glutamine + ATP + H2O = GMP + L-glutamate + AMP + diphosphate + 2 H(+)</text>
        <dbReference type="Rhea" id="RHEA:11680"/>
        <dbReference type="ChEBI" id="CHEBI:15377"/>
        <dbReference type="ChEBI" id="CHEBI:15378"/>
        <dbReference type="ChEBI" id="CHEBI:29985"/>
        <dbReference type="ChEBI" id="CHEBI:30616"/>
        <dbReference type="ChEBI" id="CHEBI:33019"/>
        <dbReference type="ChEBI" id="CHEBI:57464"/>
        <dbReference type="ChEBI" id="CHEBI:58115"/>
        <dbReference type="ChEBI" id="CHEBI:58359"/>
        <dbReference type="ChEBI" id="CHEBI:456215"/>
        <dbReference type="EC" id="6.3.5.2"/>
    </reaction>
</comment>
<comment type="pathway">
    <text evidence="1">Purine metabolism; GMP biosynthesis; GMP from XMP (L-Gln route): step 1/1.</text>
</comment>
<comment type="subunit">
    <text evidence="1">Homodimer.</text>
</comment>
<proteinExistence type="inferred from homology"/>
<dbReference type="EC" id="6.3.5.2" evidence="1"/>
<dbReference type="EMBL" id="AE017196">
    <property type="protein sequence ID" value="AAS13941.1"/>
    <property type="molecule type" value="Genomic_DNA"/>
</dbReference>
<dbReference type="RefSeq" id="WP_010962427.1">
    <property type="nucleotide sequence ID" value="NZ_OX384529.1"/>
</dbReference>
<dbReference type="SMR" id="Q73IH1"/>
<dbReference type="EnsemblBacteria" id="AAS13941">
    <property type="protein sequence ID" value="AAS13941"/>
    <property type="gene ID" value="WD_0195"/>
</dbReference>
<dbReference type="GeneID" id="70035683"/>
<dbReference type="KEGG" id="wol:WD_0195"/>
<dbReference type="eggNOG" id="COG0518">
    <property type="taxonomic scope" value="Bacteria"/>
</dbReference>
<dbReference type="eggNOG" id="COG0519">
    <property type="taxonomic scope" value="Bacteria"/>
</dbReference>
<dbReference type="UniPathway" id="UPA00189">
    <property type="reaction ID" value="UER00296"/>
</dbReference>
<dbReference type="Proteomes" id="UP000008215">
    <property type="component" value="Chromosome"/>
</dbReference>
<dbReference type="GO" id="GO:0005829">
    <property type="term" value="C:cytosol"/>
    <property type="evidence" value="ECO:0007669"/>
    <property type="project" value="TreeGrafter"/>
</dbReference>
<dbReference type="GO" id="GO:0005524">
    <property type="term" value="F:ATP binding"/>
    <property type="evidence" value="ECO:0007669"/>
    <property type="project" value="UniProtKB-UniRule"/>
</dbReference>
<dbReference type="GO" id="GO:0003921">
    <property type="term" value="F:GMP synthase activity"/>
    <property type="evidence" value="ECO:0007669"/>
    <property type="project" value="InterPro"/>
</dbReference>
<dbReference type="CDD" id="cd01742">
    <property type="entry name" value="GATase1_GMP_Synthase"/>
    <property type="match status" value="1"/>
</dbReference>
<dbReference type="CDD" id="cd01997">
    <property type="entry name" value="GMP_synthase_C"/>
    <property type="match status" value="1"/>
</dbReference>
<dbReference type="FunFam" id="3.30.300.10:FF:000002">
    <property type="entry name" value="GMP synthase [glutamine-hydrolyzing]"/>
    <property type="match status" value="1"/>
</dbReference>
<dbReference type="FunFam" id="3.40.50.620:FF:000001">
    <property type="entry name" value="GMP synthase [glutamine-hydrolyzing]"/>
    <property type="match status" value="1"/>
</dbReference>
<dbReference type="Gene3D" id="3.30.300.10">
    <property type="match status" value="1"/>
</dbReference>
<dbReference type="Gene3D" id="3.40.50.880">
    <property type="match status" value="1"/>
</dbReference>
<dbReference type="Gene3D" id="3.40.50.620">
    <property type="entry name" value="HUPs"/>
    <property type="match status" value="1"/>
</dbReference>
<dbReference type="HAMAP" id="MF_00344">
    <property type="entry name" value="GMP_synthase"/>
    <property type="match status" value="1"/>
</dbReference>
<dbReference type="InterPro" id="IPR029062">
    <property type="entry name" value="Class_I_gatase-like"/>
</dbReference>
<dbReference type="InterPro" id="IPR017926">
    <property type="entry name" value="GATASE"/>
</dbReference>
<dbReference type="InterPro" id="IPR001674">
    <property type="entry name" value="GMP_synth_C"/>
</dbReference>
<dbReference type="InterPro" id="IPR004739">
    <property type="entry name" value="GMP_synth_GATase"/>
</dbReference>
<dbReference type="InterPro" id="IPR022955">
    <property type="entry name" value="GMP_synthase"/>
</dbReference>
<dbReference type="InterPro" id="IPR025777">
    <property type="entry name" value="GMPS_ATP_PPase_dom"/>
</dbReference>
<dbReference type="InterPro" id="IPR022310">
    <property type="entry name" value="NAD/GMP_synthase"/>
</dbReference>
<dbReference type="InterPro" id="IPR014729">
    <property type="entry name" value="Rossmann-like_a/b/a_fold"/>
</dbReference>
<dbReference type="NCBIfam" id="TIGR00884">
    <property type="entry name" value="guaA_Cterm"/>
    <property type="match status" value="1"/>
</dbReference>
<dbReference type="NCBIfam" id="TIGR00888">
    <property type="entry name" value="guaA_Nterm"/>
    <property type="match status" value="1"/>
</dbReference>
<dbReference type="NCBIfam" id="NF000848">
    <property type="entry name" value="PRK00074.1"/>
    <property type="match status" value="1"/>
</dbReference>
<dbReference type="PANTHER" id="PTHR11922:SF2">
    <property type="entry name" value="GMP SYNTHASE [GLUTAMINE-HYDROLYZING]"/>
    <property type="match status" value="1"/>
</dbReference>
<dbReference type="PANTHER" id="PTHR11922">
    <property type="entry name" value="GMP SYNTHASE-RELATED"/>
    <property type="match status" value="1"/>
</dbReference>
<dbReference type="Pfam" id="PF00117">
    <property type="entry name" value="GATase"/>
    <property type="match status" value="1"/>
</dbReference>
<dbReference type="Pfam" id="PF00958">
    <property type="entry name" value="GMP_synt_C"/>
    <property type="match status" value="1"/>
</dbReference>
<dbReference type="Pfam" id="PF02540">
    <property type="entry name" value="NAD_synthase"/>
    <property type="match status" value="1"/>
</dbReference>
<dbReference type="PRINTS" id="PR00096">
    <property type="entry name" value="GATASE"/>
</dbReference>
<dbReference type="SUPFAM" id="SSF52402">
    <property type="entry name" value="Adenine nucleotide alpha hydrolases-like"/>
    <property type="match status" value="1"/>
</dbReference>
<dbReference type="SUPFAM" id="SSF52317">
    <property type="entry name" value="Class I glutamine amidotransferase-like"/>
    <property type="match status" value="1"/>
</dbReference>
<dbReference type="SUPFAM" id="SSF54810">
    <property type="entry name" value="GMP synthetase C-terminal dimerisation domain"/>
    <property type="match status" value="1"/>
</dbReference>
<dbReference type="PROSITE" id="PS51273">
    <property type="entry name" value="GATASE_TYPE_1"/>
    <property type="match status" value="1"/>
</dbReference>
<dbReference type="PROSITE" id="PS51553">
    <property type="entry name" value="GMPS_ATP_PPASE"/>
    <property type="match status" value="1"/>
</dbReference>
<reference key="1">
    <citation type="journal article" date="2004" name="PLoS Biol.">
        <title>Phylogenomics of the reproductive parasite Wolbachia pipientis wMel: a streamlined genome overrun by mobile genetic elements.</title>
        <authorList>
            <person name="Wu M."/>
            <person name="Sun L.V."/>
            <person name="Vamathevan J.J."/>
            <person name="Riegler M."/>
            <person name="DeBoy R.T."/>
            <person name="Brownlie J.C."/>
            <person name="McGraw E.A."/>
            <person name="Martin W."/>
            <person name="Esser C."/>
            <person name="Ahmadinejad N."/>
            <person name="Wiegand C."/>
            <person name="Madupu R."/>
            <person name="Beanan M.J."/>
            <person name="Brinkac L.M."/>
            <person name="Daugherty S.C."/>
            <person name="Durkin A.S."/>
            <person name="Kolonay J.F."/>
            <person name="Nelson W.C."/>
            <person name="Mohamoud Y."/>
            <person name="Lee P."/>
            <person name="Berry K.J."/>
            <person name="Young M.B."/>
            <person name="Utterback T.R."/>
            <person name="Weidman J.F."/>
            <person name="Nierman W.C."/>
            <person name="Paulsen I.T."/>
            <person name="Nelson K.E."/>
            <person name="Tettelin H."/>
            <person name="O'Neill S.L."/>
            <person name="Eisen J.A."/>
        </authorList>
    </citation>
    <scope>NUCLEOTIDE SEQUENCE [LARGE SCALE GENOMIC DNA]</scope>
</reference>
<organism>
    <name type="scientific">Wolbachia pipientis wMel</name>
    <dbReference type="NCBI Taxonomy" id="163164"/>
    <lineage>
        <taxon>Bacteria</taxon>
        <taxon>Pseudomonadati</taxon>
        <taxon>Pseudomonadota</taxon>
        <taxon>Alphaproteobacteria</taxon>
        <taxon>Rickettsiales</taxon>
        <taxon>Anaplasmataceae</taxon>
        <taxon>Wolbachieae</taxon>
        <taxon>Wolbachia</taxon>
    </lineage>
</organism>
<keyword id="KW-0067">ATP-binding</keyword>
<keyword id="KW-0315">Glutamine amidotransferase</keyword>
<keyword id="KW-0332">GMP biosynthesis</keyword>
<keyword id="KW-0436">Ligase</keyword>
<keyword id="KW-0547">Nucleotide-binding</keyword>
<keyword id="KW-0658">Purine biosynthesis</keyword>
<name>GUAA_WOLPM</name>
<evidence type="ECO:0000255" key="1">
    <source>
        <dbReference type="HAMAP-Rule" id="MF_00344"/>
    </source>
</evidence>
<gene>
    <name evidence="1" type="primary">guaA</name>
    <name type="ordered locus">WD_0195</name>
</gene>
<protein>
    <recommendedName>
        <fullName evidence="1">GMP synthase [glutamine-hydrolyzing]</fullName>
        <ecNumber evidence="1">6.3.5.2</ecNumber>
    </recommendedName>
    <alternativeName>
        <fullName evidence="1">GMP synthetase</fullName>
    </alternativeName>
    <alternativeName>
        <fullName evidence="1">Glutamine amidotransferase</fullName>
    </alternativeName>
</protein>
<accession>Q73IH1</accession>
<sequence>MSAIAIIDFGSQFTQLIARQVRGMGVYCEIFPSNISFETISKFNGFILSGGPQSVNDDCSETSRVVHEIIKLNEATSVPILGICYGQQLICHYFGAKVKESFKQEFGRTKIKILKESPIVKDTWDVNSEVDVLMNHADSVDTIPQGFTVIASGVINQTIAMIVNEQRKIYCTQFHPEVKPTTNGSKLLSNFLDIANCKRDWTMKSFIEEQKEKIKNVVGEKKVIAAVSGGVDSSVAAALTHKAIGKQLNCIFIDTGLLRKNQTIAMLKEIPINYVDKSNLFLSRLKGITDPEEKRKIIGNTFIEVFEEEAKKIGDVDFLMQGTIYSDVVESGHASDNTSTIKSHHNVGGLPEKMNLKLVEPLRYLFKDEVRLLGKEIGLSDEIIFQHPFPGPGLAVRIISEVDKEKVQILQEVDEIYINTMKNYDLYDKIWQAFAVLLPIKTVGVMGDGRTYGYVCALRAVTSSDGMTADAFPFEDKDQHLLVFWDFLRNVGSIIVNNVPGVNRVVYDITSKPPATIEWE</sequence>
<feature type="chain" id="PRO_0000140208" description="GMP synthase [glutamine-hydrolyzing]">
    <location>
        <begin position="1"/>
        <end position="520"/>
    </location>
</feature>
<feature type="domain" description="Glutamine amidotransferase type-1" evidence="1">
    <location>
        <begin position="3"/>
        <end position="200"/>
    </location>
</feature>
<feature type="domain" description="GMPS ATP-PPase" evidence="1">
    <location>
        <begin position="201"/>
        <end position="386"/>
    </location>
</feature>
<feature type="active site" description="Nucleophile" evidence="1">
    <location>
        <position position="84"/>
    </location>
</feature>
<feature type="active site" evidence="1">
    <location>
        <position position="175"/>
    </location>
</feature>
<feature type="active site" evidence="1">
    <location>
        <position position="177"/>
    </location>
</feature>
<feature type="binding site" evidence="1">
    <location>
        <begin position="228"/>
        <end position="234"/>
    </location>
    <ligand>
        <name>ATP</name>
        <dbReference type="ChEBI" id="CHEBI:30616"/>
    </ligand>
</feature>